<proteinExistence type="evidence at protein level"/>
<reference key="1">
    <citation type="journal article" date="2005" name="Science">
        <title>The transcriptional landscape of the mammalian genome.</title>
        <authorList>
            <person name="Carninci P."/>
            <person name="Kasukawa T."/>
            <person name="Katayama S."/>
            <person name="Gough J."/>
            <person name="Frith M.C."/>
            <person name="Maeda N."/>
            <person name="Oyama R."/>
            <person name="Ravasi T."/>
            <person name="Lenhard B."/>
            <person name="Wells C."/>
            <person name="Kodzius R."/>
            <person name="Shimokawa K."/>
            <person name="Bajic V.B."/>
            <person name="Brenner S.E."/>
            <person name="Batalov S."/>
            <person name="Forrest A.R."/>
            <person name="Zavolan M."/>
            <person name="Davis M.J."/>
            <person name="Wilming L.G."/>
            <person name="Aidinis V."/>
            <person name="Allen J.E."/>
            <person name="Ambesi-Impiombato A."/>
            <person name="Apweiler R."/>
            <person name="Aturaliya R.N."/>
            <person name="Bailey T.L."/>
            <person name="Bansal M."/>
            <person name="Baxter L."/>
            <person name="Beisel K.W."/>
            <person name="Bersano T."/>
            <person name="Bono H."/>
            <person name="Chalk A.M."/>
            <person name="Chiu K.P."/>
            <person name="Choudhary V."/>
            <person name="Christoffels A."/>
            <person name="Clutterbuck D.R."/>
            <person name="Crowe M.L."/>
            <person name="Dalla E."/>
            <person name="Dalrymple B.P."/>
            <person name="de Bono B."/>
            <person name="Della Gatta G."/>
            <person name="di Bernardo D."/>
            <person name="Down T."/>
            <person name="Engstrom P."/>
            <person name="Fagiolini M."/>
            <person name="Faulkner G."/>
            <person name="Fletcher C.F."/>
            <person name="Fukushima T."/>
            <person name="Furuno M."/>
            <person name="Futaki S."/>
            <person name="Gariboldi M."/>
            <person name="Georgii-Hemming P."/>
            <person name="Gingeras T.R."/>
            <person name="Gojobori T."/>
            <person name="Green R.E."/>
            <person name="Gustincich S."/>
            <person name="Harbers M."/>
            <person name="Hayashi Y."/>
            <person name="Hensch T.K."/>
            <person name="Hirokawa N."/>
            <person name="Hill D."/>
            <person name="Huminiecki L."/>
            <person name="Iacono M."/>
            <person name="Ikeo K."/>
            <person name="Iwama A."/>
            <person name="Ishikawa T."/>
            <person name="Jakt M."/>
            <person name="Kanapin A."/>
            <person name="Katoh M."/>
            <person name="Kawasawa Y."/>
            <person name="Kelso J."/>
            <person name="Kitamura H."/>
            <person name="Kitano H."/>
            <person name="Kollias G."/>
            <person name="Krishnan S.P."/>
            <person name="Kruger A."/>
            <person name="Kummerfeld S.K."/>
            <person name="Kurochkin I.V."/>
            <person name="Lareau L.F."/>
            <person name="Lazarevic D."/>
            <person name="Lipovich L."/>
            <person name="Liu J."/>
            <person name="Liuni S."/>
            <person name="McWilliam S."/>
            <person name="Madan Babu M."/>
            <person name="Madera M."/>
            <person name="Marchionni L."/>
            <person name="Matsuda H."/>
            <person name="Matsuzawa S."/>
            <person name="Miki H."/>
            <person name="Mignone F."/>
            <person name="Miyake S."/>
            <person name="Morris K."/>
            <person name="Mottagui-Tabar S."/>
            <person name="Mulder N."/>
            <person name="Nakano N."/>
            <person name="Nakauchi H."/>
            <person name="Ng P."/>
            <person name="Nilsson R."/>
            <person name="Nishiguchi S."/>
            <person name="Nishikawa S."/>
            <person name="Nori F."/>
            <person name="Ohara O."/>
            <person name="Okazaki Y."/>
            <person name="Orlando V."/>
            <person name="Pang K.C."/>
            <person name="Pavan W.J."/>
            <person name="Pavesi G."/>
            <person name="Pesole G."/>
            <person name="Petrovsky N."/>
            <person name="Piazza S."/>
            <person name="Reed J."/>
            <person name="Reid J.F."/>
            <person name="Ring B.Z."/>
            <person name="Ringwald M."/>
            <person name="Rost B."/>
            <person name="Ruan Y."/>
            <person name="Salzberg S.L."/>
            <person name="Sandelin A."/>
            <person name="Schneider C."/>
            <person name="Schoenbach C."/>
            <person name="Sekiguchi K."/>
            <person name="Semple C.A."/>
            <person name="Seno S."/>
            <person name="Sessa L."/>
            <person name="Sheng Y."/>
            <person name="Shibata Y."/>
            <person name="Shimada H."/>
            <person name="Shimada K."/>
            <person name="Silva D."/>
            <person name="Sinclair B."/>
            <person name="Sperling S."/>
            <person name="Stupka E."/>
            <person name="Sugiura K."/>
            <person name="Sultana R."/>
            <person name="Takenaka Y."/>
            <person name="Taki K."/>
            <person name="Tammoja K."/>
            <person name="Tan S.L."/>
            <person name="Tang S."/>
            <person name="Taylor M.S."/>
            <person name="Tegner J."/>
            <person name="Teichmann S.A."/>
            <person name="Ueda H.R."/>
            <person name="van Nimwegen E."/>
            <person name="Verardo R."/>
            <person name="Wei C.L."/>
            <person name="Yagi K."/>
            <person name="Yamanishi H."/>
            <person name="Zabarovsky E."/>
            <person name="Zhu S."/>
            <person name="Zimmer A."/>
            <person name="Hide W."/>
            <person name="Bult C."/>
            <person name="Grimmond S.M."/>
            <person name="Teasdale R.D."/>
            <person name="Liu E.T."/>
            <person name="Brusic V."/>
            <person name="Quackenbush J."/>
            <person name="Wahlestedt C."/>
            <person name="Mattick J.S."/>
            <person name="Hume D.A."/>
            <person name="Kai C."/>
            <person name="Sasaki D."/>
            <person name="Tomaru Y."/>
            <person name="Fukuda S."/>
            <person name="Kanamori-Katayama M."/>
            <person name="Suzuki M."/>
            <person name="Aoki J."/>
            <person name="Arakawa T."/>
            <person name="Iida J."/>
            <person name="Imamura K."/>
            <person name="Itoh M."/>
            <person name="Kato T."/>
            <person name="Kawaji H."/>
            <person name="Kawagashira N."/>
            <person name="Kawashima T."/>
            <person name="Kojima M."/>
            <person name="Kondo S."/>
            <person name="Konno H."/>
            <person name="Nakano K."/>
            <person name="Ninomiya N."/>
            <person name="Nishio T."/>
            <person name="Okada M."/>
            <person name="Plessy C."/>
            <person name="Shibata K."/>
            <person name="Shiraki T."/>
            <person name="Suzuki S."/>
            <person name="Tagami M."/>
            <person name="Waki K."/>
            <person name="Watahiki A."/>
            <person name="Okamura-Oho Y."/>
            <person name="Suzuki H."/>
            <person name="Kawai J."/>
            <person name="Hayashizaki Y."/>
        </authorList>
    </citation>
    <scope>NUCLEOTIDE SEQUENCE [LARGE SCALE MRNA]</scope>
    <source>
        <strain>C57BL/6J</strain>
    </source>
</reference>
<reference key="2">
    <citation type="journal article" date="2004" name="Genome Res.">
        <title>The status, quality, and expansion of the NIH full-length cDNA project: the Mammalian Gene Collection (MGC).</title>
        <authorList>
            <consortium name="The MGC Project Team"/>
        </authorList>
    </citation>
    <scope>NUCLEOTIDE SEQUENCE [LARGE SCALE MRNA]</scope>
    <source>
        <tissue>Brain</tissue>
    </source>
</reference>
<reference key="3">
    <citation type="journal article" date="2010" name="Cell">
        <title>A tissue-specific atlas of mouse protein phosphorylation and expression.</title>
        <authorList>
            <person name="Huttlin E.L."/>
            <person name="Jedrychowski M.P."/>
            <person name="Elias J.E."/>
            <person name="Goswami T."/>
            <person name="Rad R."/>
            <person name="Beausoleil S.A."/>
            <person name="Villen J."/>
            <person name="Haas W."/>
            <person name="Sowa M.E."/>
            <person name="Gygi S.P."/>
        </authorList>
    </citation>
    <scope>IDENTIFICATION BY MASS SPECTROMETRY [LARGE SCALE ANALYSIS]</scope>
    <source>
        <tissue>Heart</tissue>
        <tissue>Testis</tissue>
    </source>
</reference>
<evidence type="ECO:0000250" key="1">
    <source>
        <dbReference type="UniProtKB" id="Q7Z4G1"/>
    </source>
</evidence>
<evidence type="ECO:0000255" key="2">
    <source>
        <dbReference type="PROSITE-ProRule" id="PRU00602"/>
    </source>
</evidence>
<evidence type="ECO:0000305" key="3"/>
<accession>Q3V4B5</accession>
<feature type="chain" id="PRO_0000294141" description="COMM domain-containing protein 6">
    <location>
        <begin position="1"/>
        <end position="87"/>
    </location>
</feature>
<feature type="domain" description="COMM" evidence="2">
    <location>
        <begin position="20"/>
        <end position="87"/>
    </location>
</feature>
<feature type="modified residue" description="N-acetylmethionine" evidence="1">
    <location>
        <position position="1"/>
    </location>
</feature>
<keyword id="KW-0007">Acetylation</keyword>
<keyword id="KW-0963">Cytoplasm</keyword>
<keyword id="KW-0539">Nucleus</keyword>
<keyword id="KW-1185">Reference proteome</keyword>
<keyword id="KW-0804">Transcription</keyword>
<keyword id="KW-0805">Transcription regulation</keyword>
<keyword id="KW-0833">Ubl conjugation pathway</keyword>
<sequence length="87" mass="9795">MEESGFREPVLDAKSEVTGQLIDFQWKLGMAVSSDSCRSLKYPYVAVMLKVADHSGQVSSKSIEMTIPQFQNFYKQFKEIAAVIETV</sequence>
<organism>
    <name type="scientific">Mus musculus</name>
    <name type="common">Mouse</name>
    <dbReference type="NCBI Taxonomy" id="10090"/>
    <lineage>
        <taxon>Eukaryota</taxon>
        <taxon>Metazoa</taxon>
        <taxon>Chordata</taxon>
        <taxon>Craniata</taxon>
        <taxon>Vertebrata</taxon>
        <taxon>Euteleostomi</taxon>
        <taxon>Mammalia</taxon>
        <taxon>Eutheria</taxon>
        <taxon>Euarchontoglires</taxon>
        <taxon>Glires</taxon>
        <taxon>Rodentia</taxon>
        <taxon>Myomorpha</taxon>
        <taxon>Muroidea</taxon>
        <taxon>Muridae</taxon>
        <taxon>Murinae</taxon>
        <taxon>Mus</taxon>
        <taxon>Mus</taxon>
    </lineage>
</organism>
<protein>
    <recommendedName>
        <fullName>COMM domain-containing protein 6</fullName>
    </recommendedName>
</protein>
<gene>
    <name type="primary">Commd6</name>
</gene>
<comment type="function">
    <text evidence="1">Scaffold protein in the commander complex that is essential for endosomal recycling of transmembrane cargos; the commander complex is composed of the CCC subcomplex and the retriever subcomplex (By similarity). May modulate activity of cullin-RING E3 ubiquitin ligase (CRL) complexes (By similarity). Down-regulates activation of NF-kappa-B (By similarity). Inhibits TNF-induced NFKB1 activation (By similarity).</text>
</comment>
<comment type="subunit">
    <text evidence="1">Component of the commander complex consisting of the CCC subcomplex and the retriever subcomplex (By similarity). Component of the CCC (COMMD/CCDC22/CCDC93) subcomplex consisting of COMMD1, COMMD2, COMMD3, COMMD4, COMMD5, COMMD6, COMMD7, COMMD8, COMMD9, COMMD10, CCDC22 and CCDC93; within the complex forms a heterodimer with COMMD1 (By similarity). May form a homodimer with isoform 1 (By similarity). Interacts with RELA, RELB, NFKB1/p105 (By similarity). Does not interact with NFKBIB (By similarity). Interacts with CCDC22, CCDC93, SCNN1B, CUL4A (By similarity).</text>
</comment>
<comment type="subcellular location">
    <subcellularLocation>
        <location evidence="1">Nucleus</location>
    </subcellularLocation>
    <subcellularLocation>
        <location evidence="1">Cytoplasm</location>
    </subcellularLocation>
</comment>
<comment type="similarity">
    <text evidence="3">Belongs to the COMM domain-containing protein 6 family.</text>
</comment>
<dbReference type="EMBL" id="AK004316">
    <property type="protein sequence ID" value="BAE43169.1"/>
    <property type="molecule type" value="mRNA"/>
</dbReference>
<dbReference type="EMBL" id="BC132261">
    <property type="protein sequence ID" value="AAI32262.1"/>
    <property type="molecule type" value="mRNA"/>
</dbReference>
<dbReference type="EMBL" id="BC132265">
    <property type="protein sequence ID" value="AAI32266.1"/>
    <property type="molecule type" value="mRNA"/>
</dbReference>
<dbReference type="CCDS" id="CCDS37000.1"/>
<dbReference type="RefSeq" id="NP_001028304.1">
    <property type="nucleotide sequence ID" value="NM_001033132.3"/>
</dbReference>
<dbReference type="SMR" id="Q3V4B5"/>
<dbReference type="BioGRID" id="211292">
    <property type="interactions" value="1"/>
</dbReference>
<dbReference type="FunCoup" id="Q3V4B5">
    <property type="interactions" value="47"/>
</dbReference>
<dbReference type="STRING" id="10090.ENSMUSP00000097912"/>
<dbReference type="iPTMnet" id="Q3V4B5"/>
<dbReference type="PhosphoSitePlus" id="Q3V4B5"/>
<dbReference type="PaxDb" id="10090-ENSMUSP00000097912"/>
<dbReference type="ProteomicsDB" id="285246"/>
<dbReference type="Pumba" id="Q3V4B5"/>
<dbReference type="Antibodypedia" id="71333">
    <property type="antibodies" value="27 antibodies from 6 providers"/>
</dbReference>
<dbReference type="Ensembl" id="ENSMUST00000100339.9">
    <property type="protein sequence ID" value="ENSMUSP00000097912.3"/>
    <property type="gene ID" value="ENSMUSG00000075486.11"/>
</dbReference>
<dbReference type="GeneID" id="66200"/>
<dbReference type="KEGG" id="mmu:66200"/>
<dbReference type="UCSC" id="uc007uvt.2">
    <property type="organism name" value="mouse"/>
</dbReference>
<dbReference type="AGR" id="MGI:1913450"/>
<dbReference type="CTD" id="170622"/>
<dbReference type="MGI" id="MGI:1913450">
    <property type="gene designation" value="Commd6"/>
</dbReference>
<dbReference type="VEuPathDB" id="HostDB:ENSMUSG00000075486"/>
<dbReference type="eggNOG" id="ENOG502S1WA">
    <property type="taxonomic scope" value="Eukaryota"/>
</dbReference>
<dbReference type="GeneTree" id="ENSGT00390000018369"/>
<dbReference type="InParanoid" id="Q3V4B5"/>
<dbReference type="OMA" id="KLVDFQW"/>
<dbReference type="OrthoDB" id="10251827at2759"/>
<dbReference type="PhylomeDB" id="Q3V4B5"/>
<dbReference type="TreeFam" id="TF333414"/>
<dbReference type="Reactome" id="R-MMU-8951664">
    <property type="pathway name" value="Neddylation"/>
</dbReference>
<dbReference type="BioGRID-ORCS" id="66200">
    <property type="hits" value="3 hits in 75 CRISPR screens"/>
</dbReference>
<dbReference type="ChiTaRS" id="Commd6">
    <property type="organism name" value="mouse"/>
</dbReference>
<dbReference type="PRO" id="PR:Q3V4B5"/>
<dbReference type="Proteomes" id="UP000000589">
    <property type="component" value="Chromosome 14"/>
</dbReference>
<dbReference type="RNAct" id="Q3V4B5">
    <property type="molecule type" value="protein"/>
</dbReference>
<dbReference type="Bgee" id="ENSMUSG00000075486">
    <property type="expression patterns" value="Expressed in gonadal fat pad and 256 other cell types or tissues"/>
</dbReference>
<dbReference type="ExpressionAtlas" id="Q3V4B5">
    <property type="expression patterns" value="baseline and differential"/>
</dbReference>
<dbReference type="GO" id="GO:0005737">
    <property type="term" value="C:cytoplasm"/>
    <property type="evidence" value="ECO:0007669"/>
    <property type="project" value="UniProtKB-SubCell"/>
</dbReference>
<dbReference type="GO" id="GO:0005634">
    <property type="term" value="C:nucleus"/>
    <property type="evidence" value="ECO:0007669"/>
    <property type="project" value="UniProtKB-SubCell"/>
</dbReference>
<dbReference type="GO" id="GO:0051059">
    <property type="term" value="F:NF-kappaB binding"/>
    <property type="evidence" value="ECO:0000266"/>
    <property type="project" value="MGI"/>
</dbReference>
<dbReference type="InterPro" id="IPR017920">
    <property type="entry name" value="COMM"/>
</dbReference>
<dbReference type="InterPro" id="IPR047155">
    <property type="entry name" value="COMMD4/6/7/8"/>
</dbReference>
<dbReference type="PANTHER" id="PTHR16231">
    <property type="entry name" value="COMM DOMAIN-CONTAINING PROTEIN 4-8 FAMILY MEMBER"/>
    <property type="match status" value="1"/>
</dbReference>
<dbReference type="PANTHER" id="PTHR16231:SF5">
    <property type="entry name" value="COMM DOMAIN-CONTAINING PROTEIN 6"/>
    <property type="match status" value="1"/>
</dbReference>
<dbReference type="Pfam" id="PF07258">
    <property type="entry name" value="COMM_domain"/>
    <property type="match status" value="1"/>
</dbReference>
<dbReference type="PROSITE" id="PS51269">
    <property type="entry name" value="COMM"/>
    <property type="match status" value="1"/>
</dbReference>
<name>COMD6_MOUSE</name>